<sequence>MKVSKDKSKKGVKSKPKTSRKPLSLKQKLQRESKIVKVDNLNWKAVDIPDNLDDYQGFYGLEEIDGVDVKVTGGNVEFVVKDNSKVKDSDNEEDDDDVHDDDDNQDDGDDDQDDDDVDIEDDEDEIIEGDNEDDFKGFDDDNAINEDDQMDIESAKTEKKSKKEVKPKNEKVAKKDSILESAFKNVDLTLPDDNEVNLPYWDDLSLSSFTLNGLSALEYEKPTAIQKRTIPLAIEGKDVIGKAITGSGKTLAYGIPILERHLQKMAKANQSKKVINPPTGIIFAPTRELAHQVVDHLNRIAKFTPLSQHGIVSITGGLSIQKQERLLSHGPGIVVATPGRFLELLQKDMALVQRLSCTDIVVLDEADRLLQDGHFDEFVKILELFGKHRPRDNKELEWKWQTLVFSATFSRDLFGKLDKHLKSNKNKEEMGSSLIDNDEILQLLNDKLKFKDSKPTLVDANPKEMVAGQITEALVECGPTERDLYLYYFLLLYPGSTLVFANSIDSVKRLAPFLNNLKVPTFSIHSSMIQKQRLRTLERFKEASSKNSTAVLIASDVAARGLDIPNIDHVAHYHLPRSADVYIHRSGRTGRAGKEGVSIMFCSPQESSGPLRKLRKLVANNTKKRTRLNVHNDVKLLPLEMDLVSQIKPRVTLASKLADAERSSSSTRKEDNWVHEAAEELGIDNLSDIDNFEDDFIKRQRKRKENKALTKDEARSLRLELNDLLSKQIRKNSRRSYLTSGLQNLAHQMVTGNTHKDVLGHASVNALDDLRTKKAIKKKQIKTKKVKDKK</sequence>
<name>MAK5_DEBHA</name>
<organism>
    <name type="scientific">Debaryomyces hansenii (strain ATCC 36239 / CBS 767 / BCRC 21394 / JCM 1990 / NBRC 0083 / IGC 2968)</name>
    <name type="common">Yeast</name>
    <name type="synonym">Torulaspora hansenii</name>
    <dbReference type="NCBI Taxonomy" id="284592"/>
    <lineage>
        <taxon>Eukaryota</taxon>
        <taxon>Fungi</taxon>
        <taxon>Dikarya</taxon>
        <taxon>Ascomycota</taxon>
        <taxon>Saccharomycotina</taxon>
        <taxon>Pichiomycetes</taxon>
        <taxon>Debaryomycetaceae</taxon>
        <taxon>Debaryomyces</taxon>
    </lineage>
</organism>
<gene>
    <name type="primary">MAK5</name>
    <name type="ordered locus">DEHA2C05170g</name>
</gene>
<feature type="chain" id="PRO_0000232234" description="ATP-dependent RNA helicase MAK5">
    <location>
        <begin position="1"/>
        <end position="790"/>
    </location>
</feature>
<feature type="domain" description="Helicase ATP-binding" evidence="2">
    <location>
        <begin position="230"/>
        <end position="427"/>
    </location>
</feature>
<feature type="domain" description="Helicase C-terminal" evidence="3">
    <location>
        <begin position="483"/>
        <end position="642"/>
    </location>
</feature>
<feature type="region of interest" description="Disordered" evidence="4">
    <location>
        <begin position="1"/>
        <end position="29"/>
    </location>
</feature>
<feature type="region of interest" description="Disordered" evidence="4">
    <location>
        <begin position="80"/>
        <end position="149"/>
    </location>
</feature>
<feature type="short sequence motif" description="Q motif">
    <location>
        <begin position="199"/>
        <end position="227"/>
    </location>
</feature>
<feature type="short sequence motif" description="DEAD box">
    <location>
        <begin position="364"/>
        <end position="367"/>
    </location>
</feature>
<feature type="compositionally biased region" description="Basic residues" evidence="4">
    <location>
        <begin position="7"/>
        <end position="20"/>
    </location>
</feature>
<feature type="compositionally biased region" description="Basic and acidic residues" evidence="4">
    <location>
        <begin position="80"/>
        <end position="89"/>
    </location>
</feature>
<feature type="compositionally biased region" description="Acidic residues" evidence="4">
    <location>
        <begin position="90"/>
        <end position="133"/>
    </location>
</feature>
<feature type="compositionally biased region" description="Acidic residues" evidence="4">
    <location>
        <begin position="140"/>
        <end position="149"/>
    </location>
</feature>
<feature type="binding site" evidence="2">
    <location>
        <begin position="243"/>
        <end position="250"/>
    </location>
    <ligand>
        <name>ATP</name>
        <dbReference type="ChEBI" id="CHEBI:30616"/>
    </ligand>
</feature>
<dbReference type="EC" id="3.6.4.13"/>
<dbReference type="EMBL" id="CR382135">
    <property type="protein sequence ID" value="CAG85962.1"/>
    <property type="molecule type" value="Genomic_DNA"/>
</dbReference>
<dbReference type="RefSeq" id="XP_457911.1">
    <property type="nucleotide sequence ID" value="XM_457911.1"/>
</dbReference>
<dbReference type="SMR" id="Q6BV58"/>
<dbReference type="FunCoup" id="Q6BV58">
    <property type="interactions" value="1013"/>
</dbReference>
<dbReference type="STRING" id="284592.Q6BV58"/>
<dbReference type="GeneID" id="2900812"/>
<dbReference type="KEGG" id="dha:DEHA2C05170g"/>
<dbReference type="VEuPathDB" id="FungiDB:DEHA2C05170g"/>
<dbReference type="eggNOG" id="KOG0347">
    <property type="taxonomic scope" value="Eukaryota"/>
</dbReference>
<dbReference type="HOGENOM" id="CLU_003041_13_0_1"/>
<dbReference type="InParanoid" id="Q6BV58"/>
<dbReference type="OMA" id="YYFVERY"/>
<dbReference type="OrthoDB" id="4310724at2759"/>
<dbReference type="Proteomes" id="UP000000599">
    <property type="component" value="Chromosome C"/>
</dbReference>
<dbReference type="GO" id="GO:0005829">
    <property type="term" value="C:cytosol"/>
    <property type="evidence" value="ECO:0007669"/>
    <property type="project" value="TreeGrafter"/>
</dbReference>
<dbReference type="GO" id="GO:0005730">
    <property type="term" value="C:nucleolus"/>
    <property type="evidence" value="ECO:0007669"/>
    <property type="project" value="UniProtKB-SubCell"/>
</dbReference>
<dbReference type="GO" id="GO:0005524">
    <property type="term" value="F:ATP binding"/>
    <property type="evidence" value="ECO:0007669"/>
    <property type="project" value="UniProtKB-KW"/>
</dbReference>
<dbReference type="GO" id="GO:0016887">
    <property type="term" value="F:ATP hydrolysis activity"/>
    <property type="evidence" value="ECO:0007669"/>
    <property type="project" value="RHEA"/>
</dbReference>
<dbReference type="GO" id="GO:0003723">
    <property type="term" value="F:RNA binding"/>
    <property type="evidence" value="ECO:0007669"/>
    <property type="project" value="UniProtKB-KW"/>
</dbReference>
<dbReference type="GO" id="GO:0003724">
    <property type="term" value="F:RNA helicase activity"/>
    <property type="evidence" value="ECO:0007669"/>
    <property type="project" value="UniProtKB-EC"/>
</dbReference>
<dbReference type="GO" id="GO:0006364">
    <property type="term" value="P:rRNA processing"/>
    <property type="evidence" value="ECO:0007669"/>
    <property type="project" value="UniProtKB-KW"/>
</dbReference>
<dbReference type="CDD" id="cd17946">
    <property type="entry name" value="DEADc_DDX24"/>
    <property type="match status" value="1"/>
</dbReference>
<dbReference type="CDD" id="cd18787">
    <property type="entry name" value="SF2_C_DEAD"/>
    <property type="match status" value="1"/>
</dbReference>
<dbReference type="Gene3D" id="3.40.50.300">
    <property type="entry name" value="P-loop containing nucleotide triphosphate hydrolases"/>
    <property type="match status" value="2"/>
</dbReference>
<dbReference type="InterPro" id="IPR011545">
    <property type="entry name" value="DEAD/DEAH_box_helicase_dom"/>
</dbReference>
<dbReference type="InterPro" id="IPR050079">
    <property type="entry name" value="DEAD_box_RNA_helicase"/>
</dbReference>
<dbReference type="InterPro" id="IPR014001">
    <property type="entry name" value="Helicase_ATP-bd"/>
</dbReference>
<dbReference type="InterPro" id="IPR001650">
    <property type="entry name" value="Helicase_C-like"/>
</dbReference>
<dbReference type="InterPro" id="IPR027417">
    <property type="entry name" value="P-loop_NTPase"/>
</dbReference>
<dbReference type="InterPro" id="IPR000629">
    <property type="entry name" value="RNA-helicase_DEAD-box_CS"/>
</dbReference>
<dbReference type="InterPro" id="IPR014014">
    <property type="entry name" value="RNA_helicase_DEAD_Q_motif"/>
</dbReference>
<dbReference type="PANTHER" id="PTHR47959:SF1">
    <property type="entry name" value="ATP-DEPENDENT RNA HELICASE DBPA"/>
    <property type="match status" value="1"/>
</dbReference>
<dbReference type="PANTHER" id="PTHR47959">
    <property type="entry name" value="ATP-DEPENDENT RNA HELICASE RHLE-RELATED"/>
    <property type="match status" value="1"/>
</dbReference>
<dbReference type="Pfam" id="PF00270">
    <property type="entry name" value="DEAD"/>
    <property type="match status" value="1"/>
</dbReference>
<dbReference type="Pfam" id="PF00271">
    <property type="entry name" value="Helicase_C"/>
    <property type="match status" value="1"/>
</dbReference>
<dbReference type="SMART" id="SM00487">
    <property type="entry name" value="DEXDc"/>
    <property type="match status" value="1"/>
</dbReference>
<dbReference type="SMART" id="SM00490">
    <property type="entry name" value="HELICc"/>
    <property type="match status" value="1"/>
</dbReference>
<dbReference type="SUPFAM" id="SSF52540">
    <property type="entry name" value="P-loop containing nucleoside triphosphate hydrolases"/>
    <property type="match status" value="1"/>
</dbReference>
<dbReference type="PROSITE" id="PS00039">
    <property type="entry name" value="DEAD_ATP_HELICASE"/>
    <property type="match status" value="1"/>
</dbReference>
<dbReference type="PROSITE" id="PS51192">
    <property type="entry name" value="HELICASE_ATP_BIND_1"/>
    <property type="match status" value="1"/>
</dbReference>
<dbReference type="PROSITE" id="PS51194">
    <property type="entry name" value="HELICASE_CTER"/>
    <property type="match status" value="1"/>
</dbReference>
<dbReference type="PROSITE" id="PS51195">
    <property type="entry name" value="Q_MOTIF"/>
    <property type="match status" value="1"/>
</dbReference>
<evidence type="ECO:0000250" key="1"/>
<evidence type="ECO:0000255" key="2">
    <source>
        <dbReference type="PROSITE-ProRule" id="PRU00541"/>
    </source>
</evidence>
<evidence type="ECO:0000255" key="3">
    <source>
        <dbReference type="PROSITE-ProRule" id="PRU00542"/>
    </source>
</evidence>
<evidence type="ECO:0000256" key="4">
    <source>
        <dbReference type="SAM" id="MobiDB-lite"/>
    </source>
</evidence>
<evidence type="ECO:0000305" key="5"/>
<proteinExistence type="inferred from homology"/>
<accession>Q6BV58</accession>
<reference key="1">
    <citation type="journal article" date="2004" name="Nature">
        <title>Genome evolution in yeasts.</title>
        <authorList>
            <person name="Dujon B."/>
            <person name="Sherman D."/>
            <person name="Fischer G."/>
            <person name="Durrens P."/>
            <person name="Casaregola S."/>
            <person name="Lafontaine I."/>
            <person name="de Montigny J."/>
            <person name="Marck C."/>
            <person name="Neuveglise C."/>
            <person name="Talla E."/>
            <person name="Goffard N."/>
            <person name="Frangeul L."/>
            <person name="Aigle M."/>
            <person name="Anthouard V."/>
            <person name="Babour A."/>
            <person name="Barbe V."/>
            <person name="Barnay S."/>
            <person name="Blanchin S."/>
            <person name="Beckerich J.-M."/>
            <person name="Beyne E."/>
            <person name="Bleykasten C."/>
            <person name="Boisrame A."/>
            <person name="Boyer J."/>
            <person name="Cattolico L."/>
            <person name="Confanioleri F."/>
            <person name="de Daruvar A."/>
            <person name="Despons L."/>
            <person name="Fabre E."/>
            <person name="Fairhead C."/>
            <person name="Ferry-Dumazet H."/>
            <person name="Groppi A."/>
            <person name="Hantraye F."/>
            <person name="Hennequin C."/>
            <person name="Jauniaux N."/>
            <person name="Joyet P."/>
            <person name="Kachouri R."/>
            <person name="Kerrest A."/>
            <person name="Koszul R."/>
            <person name="Lemaire M."/>
            <person name="Lesur I."/>
            <person name="Ma L."/>
            <person name="Muller H."/>
            <person name="Nicaud J.-M."/>
            <person name="Nikolski M."/>
            <person name="Oztas S."/>
            <person name="Ozier-Kalogeropoulos O."/>
            <person name="Pellenz S."/>
            <person name="Potier S."/>
            <person name="Richard G.-F."/>
            <person name="Straub M.-L."/>
            <person name="Suleau A."/>
            <person name="Swennen D."/>
            <person name="Tekaia F."/>
            <person name="Wesolowski-Louvel M."/>
            <person name="Westhof E."/>
            <person name="Wirth B."/>
            <person name="Zeniou-Meyer M."/>
            <person name="Zivanovic Y."/>
            <person name="Bolotin-Fukuhara M."/>
            <person name="Thierry A."/>
            <person name="Bouchier C."/>
            <person name="Caudron B."/>
            <person name="Scarpelli C."/>
            <person name="Gaillardin C."/>
            <person name="Weissenbach J."/>
            <person name="Wincker P."/>
            <person name="Souciet J.-L."/>
        </authorList>
    </citation>
    <scope>NUCLEOTIDE SEQUENCE [LARGE SCALE GENOMIC DNA]</scope>
    <source>
        <strain>ATCC 36239 / CBS 767 / BCRC 21394 / JCM 1990 / NBRC 0083 / IGC 2968</strain>
    </source>
</reference>
<comment type="function">
    <text evidence="1">ATP-binding RNA helicase involved in the biogenesis of 60S ribosomal subunits and is required for the normal formation of 25S and 5.8S rRNAs.</text>
</comment>
<comment type="catalytic activity">
    <reaction>
        <text>ATP + H2O = ADP + phosphate + H(+)</text>
        <dbReference type="Rhea" id="RHEA:13065"/>
        <dbReference type="ChEBI" id="CHEBI:15377"/>
        <dbReference type="ChEBI" id="CHEBI:15378"/>
        <dbReference type="ChEBI" id="CHEBI:30616"/>
        <dbReference type="ChEBI" id="CHEBI:43474"/>
        <dbReference type="ChEBI" id="CHEBI:456216"/>
        <dbReference type="EC" id="3.6.4.13"/>
    </reaction>
</comment>
<comment type="subcellular location">
    <subcellularLocation>
        <location evidence="1">Nucleus</location>
        <location evidence="1">Nucleolus</location>
    </subcellularLocation>
</comment>
<comment type="domain">
    <text>The Q motif is unique to and characteristic of the DEAD box family of RNA helicases and controls ATP binding and hydrolysis.</text>
</comment>
<comment type="similarity">
    <text evidence="5">Belongs to the DEAD box helicase family. DDX24/MAK5 subfamily.</text>
</comment>
<protein>
    <recommendedName>
        <fullName>ATP-dependent RNA helicase MAK5</fullName>
        <ecNumber>3.6.4.13</ecNumber>
    </recommendedName>
</protein>
<keyword id="KW-0067">ATP-binding</keyword>
<keyword id="KW-0347">Helicase</keyword>
<keyword id="KW-0378">Hydrolase</keyword>
<keyword id="KW-0547">Nucleotide-binding</keyword>
<keyword id="KW-0539">Nucleus</keyword>
<keyword id="KW-1185">Reference proteome</keyword>
<keyword id="KW-0690">Ribosome biogenesis</keyword>
<keyword id="KW-0694">RNA-binding</keyword>
<keyword id="KW-0698">rRNA processing</keyword>